<evidence type="ECO:0000250" key="1"/>
<evidence type="ECO:0000255" key="2">
    <source>
        <dbReference type="HAMAP-Rule" id="MF_00229"/>
    </source>
</evidence>
<evidence type="ECO:0000305" key="3"/>
<dbReference type="EC" id="4.3.1.3" evidence="2"/>
<dbReference type="EMBL" id="BA000030">
    <property type="protein sequence ID" value="BAC71036.1"/>
    <property type="status" value="ALT_INIT"/>
    <property type="molecule type" value="Genomic_DNA"/>
</dbReference>
<dbReference type="RefSeq" id="WP_037644951.1">
    <property type="nucleotide sequence ID" value="NZ_JZJK01000090.1"/>
</dbReference>
<dbReference type="SMR" id="Q82I33"/>
<dbReference type="GeneID" id="41540400"/>
<dbReference type="KEGG" id="sma:SAVERM_3325"/>
<dbReference type="eggNOG" id="COG2986">
    <property type="taxonomic scope" value="Bacteria"/>
</dbReference>
<dbReference type="HOGENOM" id="CLU_014801_4_0_11"/>
<dbReference type="OrthoDB" id="9806955at2"/>
<dbReference type="UniPathway" id="UPA00379">
    <property type="reaction ID" value="UER00549"/>
</dbReference>
<dbReference type="Proteomes" id="UP000000428">
    <property type="component" value="Chromosome"/>
</dbReference>
<dbReference type="GO" id="GO:0005737">
    <property type="term" value="C:cytoplasm"/>
    <property type="evidence" value="ECO:0007669"/>
    <property type="project" value="UniProtKB-SubCell"/>
</dbReference>
<dbReference type="GO" id="GO:0004397">
    <property type="term" value="F:histidine ammonia-lyase activity"/>
    <property type="evidence" value="ECO:0007669"/>
    <property type="project" value="UniProtKB-UniRule"/>
</dbReference>
<dbReference type="GO" id="GO:0019556">
    <property type="term" value="P:L-histidine catabolic process to glutamate and formamide"/>
    <property type="evidence" value="ECO:0007669"/>
    <property type="project" value="UniProtKB-UniPathway"/>
</dbReference>
<dbReference type="GO" id="GO:0019557">
    <property type="term" value="P:L-histidine catabolic process to glutamate and formate"/>
    <property type="evidence" value="ECO:0007669"/>
    <property type="project" value="UniProtKB-UniPathway"/>
</dbReference>
<dbReference type="CDD" id="cd00332">
    <property type="entry name" value="PAL-HAL"/>
    <property type="match status" value="1"/>
</dbReference>
<dbReference type="FunFam" id="1.10.275.10:FF:000005">
    <property type="entry name" value="Histidine ammonia-lyase"/>
    <property type="match status" value="1"/>
</dbReference>
<dbReference type="FunFam" id="1.20.200.10:FF:000012">
    <property type="entry name" value="Tyrosine ammonia-lyase"/>
    <property type="match status" value="1"/>
</dbReference>
<dbReference type="Gene3D" id="1.20.200.10">
    <property type="entry name" value="Fumarase/aspartase (Central domain)"/>
    <property type="match status" value="1"/>
</dbReference>
<dbReference type="Gene3D" id="1.10.275.10">
    <property type="entry name" value="Fumarase/aspartase (N-terminal domain)"/>
    <property type="match status" value="1"/>
</dbReference>
<dbReference type="HAMAP" id="MF_00229">
    <property type="entry name" value="His_ammonia_lyase"/>
    <property type="match status" value="1"/>
</dbReference>
<dbReference type="InterPro" id="IPR001106">
    <property type="entry name" value="Aromatic_Lyase"/>
</dbReference>
<dbReference type="InterPro" id="IPR024083">
    <property type="entry name" value="Fumarase/histidase_N"/>
</dbReference>
<dbReference type="InterPro" id="IPR005921">
    <property type="entry name" value="HutH"/>
</dbReference>
<dbReference type="InterPro" id="IPR008948">
    <property type="entry name" value="L-Aspartase-like"/>
</dbReference>
<dbReference type="InterPro" id="IPR022313">
    <property type="entry name" value="Phe/His_NH3-lyase_AS"/>
</dbReference>
<dbReference type="NCBIfam" id="TIGR01225">
    <property type="entry name" value="hutH"/>
    <property type="match status" value="1"/>
</dbReference>
<dbReference type="NCBIfam" id="NF006871">
    <property type="entry name" value="PRK09367.1"/>
    <property type="match status" value="1"/>
</dbReference>
<dbReference type="PANTHER" id="PTHR10362">
    <property type="entry name" value="HISTIDINE AMMONIA-LYASE"/>
    <property type="match status" value="1"/>
</dbReference>
<dbReference type="Pfam" id="PF00221">
    <property type="entry name" value="Lyase_aromatic"/>
    <property type="match status" value="1"/>
</dbReference>
<dbReference type="SUPFAM" id="SSF48557">
    <property type="entry name" value="L-aspartase-like"/>
    <property type="match status" value="1"/>
</dbReference>
<dbReference type="PROSITE" id="PS00488">
    <property type="entry name" value="PAL_HISTIDASE"/>
    <property type="match status" value="1"/>
</dbReference>
<accession>Q82I33</accession>
<gene>
    <name evidence="2" type="primary">hutH</name>
    <name type="ordered locus">SAV_3325</name>
</gene>
<protein>
    <recommendedName>
        <fullName evidence="2">Histidine ammonia-lyase</fullName>
        <shortName evidence="2">Histidase</shortName>
        <ecNumber evidence="2">4.3.1.3</ecNumber>
    </recommendedName>
</protein>
<feature type="chain" id="PRO_0000161036" description="Histidine ammonia-lyase">
    <location>
        <begin position="1"/>
        <end position="512"/>
    </location>
</feature>
<feature type="modified residue" description="2,3-didehydroalanine (Ser)" evidence="2">
    <location>
        <position position="144"/>
    </location>
</feature>
<feature type="cross-link" description="5-imidazolinone (Cys-Gly)" evidence="1">
    <location>
        <begin position="143"/>
        <end position="145"/>
    </location>
</feature>
<keyword id="KW-0963">Cytoplasm</keyword>
<keyword id="KW-0369">Histidine metabolism</keyword>
<keyword id="KW-0456">Lyase</keyword>
<keyword id="KW-1185">Reference proteome</keyword>
<proteinExistence type="inferred from homology"/>
<comment type="catalytic activity">
    <reaction evidence="2">
        <text>L-histidine = trans-urocanate + NH4(+)</text>
        <dbReference type="Rhea" id="RHEA:21232"/>
        <dbReference type="ChEBI" id="CHEBI:17771"/>
        <dbReference type="ChEBI" id="CHEBI:28938"/>
        <dbReference type="ChEBI" id="CHEBI:57595"/>
        <dbReference type="EC" id="4.3.1.3"/>
    </reaction>
</comment>
<comment type="pathway">
    <text evidence="2">Amino-acid degradation; L-histidine degradation into L-glutamate; N-formimidoyl-L-glutamate from L-histidine: step 1/3.</text>
</comment>
<comment type="subcellular location">
    <subcellularLocation>
        <location evidence="2">Cytoplasm</location>
    </subcellularLocation>
</comment>
<comment type="PTM">
    <text evidence="2">Contains an active site 4-methylidene-imidazol-5-one (MIO), which is formed autocatalytically by cyclization and dehydration of residues Cys-Ser-Gly.</text>
</comment>
<comment type="similarity">
    <text evidence="2">Belongs to the PAL/histidase family.</text>
</comment>
<comment type="sequence caution" evidence="3">
    <conflict type="erroneous initiation">
        <sequence resource="EMBL-CDS" id="BAC71036"/>
    </conflict>
</comment>
<organism>
    <name type="scientific">Streptomyces avermitilis (strain ATCC 31267 / DSM 46492 / JCM 5070 / NBRC 14893 / NCIMB 12804 / NRRL 8165 / MA-4680)</name>
    <dbReference type="NCBI Taxonomy" id="227882"/>
    <lineage>
        <taxon>Bacteria</taxon>
        <taxon>Bacillati</taxon>
        <taxon>Actinomycetota</taxon>
        <taxon>Actinomycetes</taxon>
        <taxon>Kitasatosporales</taxon>
        <taxon>Streptomycetaceae</taxon>
        <taxon>Streptomyces</taxon>
    </lineage>
</organism>
<name>HUTH_STRAW</name>
<reference key="1">
    <citation type="journal article" date="2001" name="Proc. Natl. Acad. Sci. U.S.A.">
        <title>Genome sequence of an industrial microorganism Streptomyces avermitilis: deducing the ability of producing secondary metabolites.</title>
        <authorList>
            <person name="Omura S."/>
            <person name="Ikeda H."/>
            <person name="Ishikawa J."/>
            <person name="Hanamoto A."/>
            <person name="Takahashi C."/>
            <person name="Shinose M."/>
            <person name="Takahashi Y."/>
            <person name="Horikawa H."/>
            <person name="Nakazawa H."/>
            <person name="Osonoe T."/>
            <person name="Kikuchi H."/>
            <person name="Shiba T."/>
            <person name="Sakaki Y."/>
            <person name="Hattori M."/>
        </authorList>
    </citation>
    <scope>NUCLEOTIDE SEQUENCE [LARGE SCALE GENOMIC DNA]</scope>
    <source>
        <strain>ATCC 31267 / DSM 46492 / JCM 5070 / NBRC 14893 / NCIMB 12804 / NRRL 8165 / MA-4680</strain>
    </source>
</reference>
<reference key="2">
    <citation type="journal article" date="2003" name="Nat. Biotechnol.">
        <title>Complete genome sequence and comparative analysis of the industrial microorganism Streptomyces avermitilis.</title>
        <authorList>
            <person name="Ikeda H."/>
            <person name="Ishikawa J."/>
            <person name="Hanamoto A."/>
            <person name="Shinose M."/>
            <person name="Kikuchi H."/>
            <person name="Shiba T."/>
            <person name="Sakaki Y."/>
            <person name="Hattori M."/>
            <person name="Omura S."/>
        </authorList>
    </citation>
    <scope>NUCLEOTIDE SEQUENCE [LARGE SCALE GENOMIC DNA]</scope>
    <source>
        <strain>ATCC 31267 / DSM 46492 / JCM 5070 / NBRC 14893 / NCIMB 12804 / NRRL 8165 / MA-4680</strain>
    </source>
</reference>
<sequence>MHTVVVGTSGVTASDVLAVARGGARIELSGEAVTALAAARGIVDALAAKPEPVYGVSTGFGALATRHISQELRAQLQRNIVRSHAAGMGPRVEREVVRALMFLRLKTVCSGHTGVRPEVAQTMADILNAGITPVVHEYGSLGCSGDLAPLSHCALTLMGEGDAEGPDGTVRPAGDLLAEHGITPVELREKEGLALLNGTDGMLGMLVMALADLDALYKSADITAALSLEALLGTDKVLAPELHAIRPHPGQGASAANMLAVLAGSELTGHHQDDAPRVQDAYSVRCAPQVAGAGRDTLAHARLVAERELASAVDNPVVLPDGRVESNGNFHGAPVAYVLDFLAIAAADLGSIAERRTDRLLDKNRSHGLPPFLADDAGVDSGLMIAQYTQAALVSEMKRLAVPASADSIPSSAMQEDHVSMGWSAARKLRTAIDNLTRIVAIELYAATRAIELREGLTPAPASQAVITAVRKAGVEGPGPDRFLAPDLAAADAFVRDGSLVTAAETVTGPLA</sequence>